<reference key="1">
    <citation type="journal article" date="1991" name="J. Gen. Microbiol.">
        <title>Cloning and DNA sequence analysis of the serC-aroA operon from Salmonella gallinarum; evolutionary relationships between the prokaryotic and eukaryotic aroA-encoded enzymes.</title>
        <authorList>
            <person name="Griffin H.G."/>
            <person name="Griffin A.M."/>
        </authorList>
    </citation>
    <scope>NUCLEOTIDE SEQUENCE [GENOMIC DNA]</scope>
    <source>
        <strain>9</strain>
    </source>
</reference>
<keyword id="KW-0028">Amino-acid biosynthesis</keyword>
<keyword id="KW-0057">Aromatic amino acid biosynthesis</keyword>
<keyword id="KW-0963">Cytoplasm</keyword>
<keyword id="KW-0808">Transferase</keyword>
<comment type="function">
    <text evidence="1">Catalyzes the transfer of the enolpyruvyl moiety of phosphoenolpyruvate (PEP) to the 5-hydroxyl of shikimate-3-phosphate (S3P) to produce enolpyruvyl shikimate-3-phosphate and inorganic phosphate.</text>
</comment>
<comment type="catalytic activity">
    <reaction evidence="1">
        <text>3-phosphoshikimate + phosphoenolpyruvate = 5-O-(1-carboxyvinyl)-3-phosphoshikimate + phosphate</text>
        <dbReference type="Rhea" id="RHEA:21256"/>
        <dbReference type="ChEBI" id="CHEBI:43474"/>
        <dbReference type="ChEBI" id="CHEBI:57701"/>
        <dbReference type="ChEBI" id="CHEBI:58702"/>
        <dbReference type="ChEBI" id="CHEBI:145989"/>
        <dbReference type="EC" id="2.5.1.19"/>
    </reaction>
    <physiologicalReaction direction="left-to-right" evidence="1">
        <dbReference type="Rhea" id="RHEA:21257"/>
    </physiologicalReaction>
</comment>
<comment type="pathway">
    <text evidence="1">Metabolic intermediate biosynthesis; chorismate biosynthesis; chorismate from D-erythrose 4-phosphate and phosphoenolpyruvate: step 6/7.</text>
</comment>
<comment type="subunit">
    <text evidence="1">Monomer.</text>
</comment>
<comment type="subcellular location">
    <subcellularLocation>
        <location evidence="1">Cytoplasm</location>
    </subcellularLocation>
</comment>
<comment type="similarity">
    <text evidence="1">Belongs to the EPSP synthase family.</text>
</comment>
<evidence type="ECO:0000255" key="1">
    <source>
        <dbReference type="HAMAP-Rule" id="MF_00210"/>
    </source>
</evidence>
<gene>
    <name evidence="1" type="primary">aroA</name>
</gene>
<protein>
    <recommendedName>
        <fullName evidence="1">3-phosphoshikimate 1-carboxyvinyltransferase</fullName>
        <ecNumber evidence="1">2.5.1.19</ecNumber>
    </recommendedName>
    <alternativeName>
        <fullName evidence="1">5-enolpyruvylshikimate-3-phosphate synthase</fullName>
        <shortName evidence="1">EPSP synthase</shortName>
        <shortName evidence="1">EPSPS</shortName>
    </alternativeName>
</protein>
<organism>
    <name type="scientific">Salmonella gallinarum</name>
    <dbReference type="NCBI Taxonomy" id="594"/>
    <lineage>
        <taxon>Bacteria</taxon>
        <taxon>Pseudomonadati</taxon>
        <taxon>Pseudomonadota</taxon>
        <taxon>Gammaproteobacteria</taxon>
        <taxon>Enterobacterales</taxon>
        <taxon>Enterobacteriaceae</taxon>
        <taxon>Salmonella</taxon>
    </lineage>
</organism>
<accession>P22299</accession>
<feature type="chain" id="PRO_0000088284" description="3-phosphoshikimate 1-carboxyvinyltransferase">
    <location>
        <begin position="1"/>
        <end position="427"/>
    </location>
</feature>
<feature type="active site" description="Proton acceptor" evidence="1">
    <location>
        <position position="313"/>
    </location>
</feature>
<feature type="binding site" evidence="1">
    <location>
        <position position="22"/>
    </location>
    <ligand>
        <name>3-phosphoshikimate</name>
        <dbReference type="ChEBI" id="CHEBI:145989"/>
    </ligand>
</feature>
<feature type="binding site" evidence="1">
    <location>
        <position position="22"/>
    </location>
    <ligand>
        <name>phosphoenolpyruvate</name>
        <dbReference type="ChEBI" id="CHEBI:58702"/>
    </ligand>
</feature>
<feature type="binding site" evidence="1">
    <location>
        <position position="23"/>
    </location>
    <ligand>
        <name>3-phosphoshikimate</name>
        <dbReference type="ChEBI" id="CHEBI:145989"/>
    </ligand>
</feature>
<feature type="binding site" evidence="1">
    <location>
        <position position="27"/>
    </location>
    <ligand>
        <name>3-phosphoshikimate</name>
        <dbReference type="ChEBI" id="CHEBI:145989"/>
    </ligand>
</feature>
<feature type="binding site" evidence="1">
    <location>
        <position position="96"/>
    </location>
    <ligand>
        <name>phosphoenolpyruvate</name>
        <dbReference type="ChEBI" id="CHEBI:58702"/>
    </ligand>
</feature>
<feature type="binding site" evidence="1">
    <location>
        <position position="124"/>
    </location>
    <ligand>
        <name>phosphoenolpyruvate</name>
        <dbReference type="ChEBI" id="CHEBI:58702"/>
    </ligand>
</feature>
<feature type="binding site" evidence="1">
    <location>
        <position position="169"/>
    </location>
    <ligand>
        <name>3-phosphoshikimate</name>
        <dbReference type="ChEBI" id="CHEBI:145989"/>
    </ligand>
</feature>
<feature type="binding site" evidence="1">
    <location>
        <position position="170"/>
    </location>
    <ligand>
        <name>3-phosphoshikimate</name>
        <dbReference type="ChEBI" id="CHEBI:145989"/>
    </ligand>
</feature>
<feature type="binding site" evidence="1">
    <location>
        <position position="171"/>
    </location>
    <ligand>
        <name>3-phosphoshikimate</name>
        <dbReference type="ChEBI" id="CHEBI:145989"/>
    </ligand>
</feature>
<feature type="binding site" evidence="1">
    <location>
        <position position="171"/>
    </location>
    <ligand>
        <name>phosphoenolpyruvate</name>
        <dbReference type="ChEBI" id="CHEBI:58702"/>
    </ligand>
</feature>
<feature type="binding site" evidence="1">
    <location>
        <position position="197"/>
    </location>
    <ligand>
        <name>3-phosphoshikimate</name>
        <dbReference type="ChEBI" id="CHEBI:145989"/>
    </ligand>
</feature>
<feature type="binding site" evidence="1">
    <location>
        <position position="313"/>
    </location>
    <ligand>
        <name>3-phosphoshikimate</name>
        <dbReference type="ChEBI" id="CHEBI:145989"/>
    </ligand>
</feature>
<feature type="binding site" evidence="1">
    <location>
        <position position="336"/>
    </location>
    <ligand>
        <name>3-phosphoshikimate</name>
        <dbReference type="ChEBI" id="CHEBI:145989"/>
    </ligand>
</feature>
<feature type="binding site" evidence="1">
    <location>
        <position position="340"/>
    </location>
    <ligand>
        <name>3-phosphoshikimate</name>
        <dbReference type="ChEBI" id="CHEBI:145989"/>
    </ligand>
</feature>
<feature type="binding site" evidence="1">
    <location>
        <position position="344"/>
    </location>
    <ligand>
        <name>phosphoenolpyruvate</name>
        <dbReference type="ChEBI" id="CHEBI:58702"/>
    </ligand>
</feature>
<feature type="binding site" evidence="1">
    <location>
        <position position="386"/>
    </location>
    <ligand>
        <name>phosphoenolpyruvate</name>
        <dbReference type="ChEBI" id="CHEBI:58702"/>
    </ligand>
</feature>
<feature type="binding site" evidence="1">
    <location>
        <position position="411"/>
    </location>
    <ligand>
        <name>phosphoenolpyruvate</name>
        <dbReference type="ChEBI" id="CHEBI:58702"/>
    </ligand>
</feature>
<sequence>MESLTLQPIARVDGAINLPGSKSVSNRALLLAALACGKTVLTNLLDSDDVRHMLNALSALGINYTLSADRTRCDITGNGGPLRAPGALELFLGNAGTAMRPLAAALCLGQNEIVLTGEPRMKERPIGHLVDSLRQGGANIDYLEQENYPPLRLRGGFIGGDIEVDGSVSSQFLTALLMTAPLAPKDTIIRVKGELVSKPYIDITLNLMKTFGVEIANHHYQQFVVKGGQQYHSPGRYLVEGDASSASYFLAAGAIKGGTVKVTGIGRKSMQGDIRFADVLEKMGATITWGDDFIACTRGELHAIDMDMNHIPDAAMTIATTALFAKGTTTLRNIYNWRVKETDRLFAMATELRKVGAEVEEGHDYIRITPPAKLQHADIGTYNDHRMAMCFSLVALSDTPVTILDPKCTAKTFPDYFEQLARMSTPA</sequence>
<dbReference type="EC" id="2.5.1.19" evidence="1"/>
<dbReference type="EMBL" id="M62801">
    <property type="protein sequence ID" value="AAA27223.1"/>
    <property type="molecule type" value="Genomic_DNA"/>
</dbReference>
<dbReference type="PIR" id="A49746">
    <property type="entry name" value="A49746"/>
</dbReference>
<dbReference type="RefSeq" id="WP_000445198.1">
    <property type="nucleotide sequence ID" value="NZ_RHEL01000004.1"/>
</dbReference>
<dbReference type="SMR" id="P22299"/>
<dbReference type="PATRIC" id="fig|594.9.peg.3155"/>
<dbReference type="OMA" id="YEDHRMA"/>
<dbReference type="UniPathway" id="UPA00053">
    <property type="reaction ID" value="UER00089"/>
</dbReference>
<dbReference type="GO" id="GO:0005737">
    <property type="term" value="C:cytoplasm"/>
    <property type="evidence" value="ECO:0007669"/>
    <property type="project" value="UniProtKB-SubCell"/>
</dbReference>
<dbReference type="GO" id="GO:0003866">
    <property type="term" value="F:3-phosphoshikimate 1-carboxyvinyltransferase activity"/>
    <property type="evidence" value="ECO:0007669"/>
    <property type="project" value="UniProtKB-UniRule"/>
</dbReference>
<dbReference type="GO" id="GO:0008652">
    <property type="term" value="P:amino acid biosynthetic process"/>
    <property type="evidence" value="ECO:0007669"/>
    <property type="project" value="UniProtKB-KW"/>
</dbReference>
<dbReference type="GO" id="GO:0009073">
    <property type="term" value="P:aromatic amino acid family biosynthetic process"/>
    <property type="evidence" value="ECO:0007669"/>
    <property type="project" value="UniProtKB-KW"/>
</dbReference>
<dbReference type="GO" id="GO:0009423">
    <property type="term" value="P:chorismate biosynthetic process"/>
    <property type="evidence" value="ECO:0007669"/>
    <property type="project" value="UniProtKB-UniRule"/>
</dbReference>
<dbReference type="FunFam" id="3.65.10.10:FF:000003">
    <property type="entry name" value="3-phosphoshikimate 1-carboxyvinyltransferase"/>
    <property type="match status" value="1"/>
</dbReference>
<dbReference type="FunFam" id="3.65.10.10:FF:000004">
    <property type="entry name" value="3-phosphoshikimate 1-carboxyvinyltransferase"/>
    <property type="match status" value="1"/>
</dbReference>
<dbReference type="Gene3D" id="3.65.10.10">
    <property type="entry name" value="Enolpyruvate transferase domain"/>
    <property type="match status" value="2"/>
</dbReference>
<dbReference type="HAMAP" id="MF_00210">
    <property type="entry name" value="EPSP_synth"/>
    <property type="match status" value="1"/>
</dbReference>
<dbReference type="InterPro" id="IPR001986">
    <property type="entry name" value="Enolpyruvate_Tfrase_dom"/>
</dbReference>
<dbReference type="InterPro" id="IPR036968">
    <property type="entry name" value="Enolpyruvate_Tfrase_sf"/>
</dbReference>
<dbReference type="InterPro" id="IPR006264">
    <property type="entry name" value="EPSP_synthase"/>
</dbReference>
<dbReference type="InterPro" id="IPR023193">
    <property type="entry name" value="EPSP_synthase_CS"/>
</dbReference>
<dbReference type="InterPro" id="IPR013792">
    <property type="entry name" value="RNA3'P_cycl/enolpyr_Trfase_a/b"/>
</dbReference>
<dbReference type="NCBIfam" id="TIGR01356">
    <property type="entry name" value="aroA"/>
    <property type="match status" value="1"/>
</dbReference>
<dbReference type="PANTHER" id="PTHR21090">
    <property type="entry name" value="AROM/DEHYDROQUINATE SYNTHASE"/>
    <property type="match status" value="1"/>
</dbReference>
<dbReference type="PANTHER" id="PTHR21090:SF5">
    <property type="entry name" value="PENTAFUNCTIONAL AROM POLYPEPTIDE"/>
    <property type="match status" value="1"/>
</dbReference>
<dbReference type="Pfam" id="PF00275">
    <property type="entry name" value="EPSP_synthase"/>
    <property type="match status" value="1"/>
</dbReference>
<dbReference type="PIRSF" id="PIRSF000505">
    <property type="entry name" value="EPSPS"/>
    <property type="match status" value="1"/>
</dbReference>
<dbReference type="SUPFAM" id="SSF55205">
    <property type="entry name" value="EPT/RTPC-like"/>
    <property type="match status" value="1"/>
</dbReference>
<dbReference type="PROSITE" id="PS00104">
    <property type="entry name" value="EPSP_SYNTHASE_1"/>
    <property type="match status" value="1"/>
</dbReference>
<dbReference type="PROSITE" id="PS00885">
    <property type="entry name" value="EPSP_SYNTHASE_2"/>
    <property type="match status" value="1"/>
</dbReference>
<proteinExistence type="inferred from homology"/>
<name>AROA_SALGL</name>